<gene>
    <name type="primary">spsA</name>
    <name type="ordered locus">BSU37910</name>
    <name type="ORF">ipa-63d</name>
</gene>
<accession>P39621</accession>
<protein>
    <recommendedName>
        <fullName>Spore coat polysaccharide biosynthesis protein SpsA</fullName>
    </recommendedName>
</protein>
<name>SPSA_BACSU</name>
<dbReference type="EMBL" id="X73124">
    <property type="protein sequence ID" value="CAA51619.1"/>
    <property type="molecule type" value="Genomic_DNA"/>
</dbReference>
<dbReference type="EMBL" id="AL009126">
    <property type="protein sequence ID" value="CAB15817.1"/>
    <property type="molecule type" value="Genomic_DNA"/>
</dbReference>
<dbReference type="PIR" id="S39718">
    <property type="entry name" value="S39718"/>
</dbReference>
<dbReference type="RefSeq" id="NP_391670.1">
    <property type="nucleotide sequence ID" value="NC_000964.3"/>
</dbReference>
<dbReference type="RefSeq" id="WP_003244383.1">
    <property type="nucleotide sequence ID" value="NZ_OZ025638.1"/>
</dbReference>
<dbReference type="PDB" id="1H7L">
    <property type="method" value="X-ray"/>
    <property type="resolution" value="1.98 A"/>
    <property type="chains" value="A=2-256"/>
</dbReference>
<dbReference type="PDB" id="1H7Q">
    <property type="method" value="X-ray"/>
    <property type="resolution" value="2.00 A"/>
    <property type="chains" value="A=2-256"/>
</dbReference>
<dbReference type="PDB" id="1QG8">
    <property type="method" value="X-ray"/>
    <property type="resolution" value="1.50 A"/>
    <property type="chains" value="A=2-256"/>
</dbReference>
<dbReference type="PDB" id="1QGQ">
    <property type="method" value="X-ray"/>
    <property type="resolution" value="1.50 A"/>
    <property type="chains" value="A=2-256"/>
</dbReference>
<dbReference type="PDB" id="1QGS">
    <property type="method" value="X-ray"/>
    <property type="resolution" value="2.00 A"/>
    <property type="chains" value="A=2-256"/>
</dbReference>
<dbReference type="PDBsum" id="1H7L"/>
<dbReference type="PDBsum" id="1H7Q"/>
<dbReference type="PDBsum" id="1QG8"/>
<dbReference type="PDBsum" id="1QGQ"/>
<dbReference type="PDBsum" id="1QGS"/>
<dbReference type="SMR" id="P39621"/>
<dbReference type="FunCoup" id="P39621">
    <property type="interactions" value="73"/>
</dbReference>
<dbReference type="STRING" id="224308.BSU37910"/>
<dbReference type="DrugBank" id="DB03435">
    <property type="generic name" value="Uridine-5'-Diphosphate"/>
</dbReference>
<dbReference type="CAZy" id="GT2">
    <property type="family name" value="Glycosyltransferase Family 2"/>
</dbReference>
<dbReference type="PaxDb" id="224308-BSU37910"/>
<dbReference type="EnsemblBacteria" id="CAB15817">
    <property type="protein sequence ID" value="CAB15817"/>
    <property type="gene ID" value="BSU_37910"/>
</dbReference>
<dbReference type="GeneID" id="937253"/>
<dbReference type="KEGG" id="bsu:BSU37910"/>
<dbReference type="PATRIC" id="fig|224308.179.peg.4104"/>
<dbReference type="eggNOG" id="COG0463">
    <property type="taxonomic scope" value="Bacteria"/>
</dbReference>
<dbReference type="InParanoid" id="P39621"/>
<dbReference type="OrthoDB" id="2850014at2"/>
<dbReference type="PhylomeDB" id="P39621"/>
<dbReference type="BioCyc" id="BSUB:BSU37910-MONOMER"/>
<dbReference type="UniPathway" id="UPA00953"/>
<dbReference type="EvolutionaryTrace" id="P39621"/>
<dbReference type="Proteomes" id="UP000001570">
    <property type="component" value="Chromosome"/>
</dbReference>
<dbReference type="GO" id="GO:0016757">
    <property type="term" value="F:glycosyltransferase activity"/>
    <property type="evidence" value="ECO:0007669"/>
    <property type="project" value="UniProtKB-KW"/>
</dbReference>
<dbReference type="CDD" id="cd00761">
    <property type="entry name" value="Glyco_tranf_GTA_type"/>
    <property type="match status" value="1"/>
</dbReference>
<dbReference type="Gene3D" id="3.90.550.10">
    <property type="entry name" value="Spore Coat Polysaccharide Biosynthesis Protein SpsA, Chain A"/>
    <property type="match status" value="1"/>
</dbReference>
<dbReference type="InterPro" id="IPR001173">
    <property type="entry name" value="Glyco_trans_2-like"/>
</dbReference>
<dbReference type="InterPro" id="IPR050834">
    <property type="entry name" value="Glycosyltransf_2"/>
</dbReference>
<dbReference type="InterPro" id="IPR029044">
    <property type="entry name" value="Nucleotide-diphossugar_trans"/>
</dbReference>
<dbReference type="PANTHER" id="PTHR43685">
    <property type="entry name" value="GLYCOSYLTRANSFERASE"/>
    <property type="match status" value="1"/>
</dbReference>
<dbReference type="PANTHER" id="PTHR43685:SF2">
    <property type="entry name" value="GLYCOSYLTRANSFERASE 2-LIKE DOMAIN-CONTAINING PROTEIN"/>
    <property type="match status" value="1"/>
</dbReference>
<dbReference type="Pfam" id="PF00535">
    <property type="entry name" value="Glycos_transf_2"/>
    <property type="match status" value="1"/>
</dbReference>
<dbReference type="SUPFAM" id="SSF53448">
    <property type="entry name" value="Nucleotide-diphospho-sugar transferases"/>
    <property type="match status" value="1"/>
</dbReference>
<feature type="chain" id="PRO_0000059219" description="Spore coat polysaccharide biosynthesis protein SpsA">
    <location>
        <begin position="1"/>
        <end position="256"/>
    </location>
</feature>
<feature type="active site" evidence="1">
    <location>
        <position position="191"/>
    </location>
</feature>
<feature type="disulfide bond">
    <location>
        <begin position="155"/>
        <end position="243"/>
    </location>
</feature>
<feature type="strand" evidence="3">
    <location>
        <begin position="4"/>
        <end position="12"/>
    </location>
</feature>
<feature type="turn" evidence="3">
    <location>
        <begin position="14"/>
        <end position="16"/>
    </location>
</feature>
<feature type="helix" evidence="3">
    <location>
        <begin position="17"/>
        <end position="25"/>
    </location>
</feature>
<feature type="strand" evidence="3">
    <location>
        <begin position="32"/>
        <end position="38"/>
    </location>
</feature>
<feature type="helix" evidence="3">
    <location>
        <begin position="43"/>
        <end position="49"/>
    </location>
</feature>
<feature type="helix" evidence="3">
    <location>
        <begin position="50"/>
        <end position="54"/>
    </location>
</feature>
<feature type="strand" evidence="3">
    <location>
        <begin position="58"/>
        <end position="62"/>
    </location>
</feature>
<feature type="helix" evidence="3">
    <location>
        <begin position="68"/>
        <end position="72"/>
    </location>
</feature>
<feature type="helix" evidence="3">
    <location>
        <begin position="76"/>
        <end position="87"/>
    </location>
</feature>
<feature type="strand" evidence="3">
    <location>
        <begin position="91"/>
        <end position="97"/>
    </location>
</feature>
<feature type="strand" evidence="3">
    <location>
        <begin position="100"/>
        <end position="102"/>
    </location>
</feature>
<feature type="helix" evidence="3">
    <location>
        <begin position="106"/>
        <end position="116"/>
    </location>
</feature>
<feature type="strand" evidence="3">
    <location>
        <begin position="122"/>
        <end position="132"/>
    </location>
</feature>
<feature type="strand" evidence="3">
    <location>
        <begin position="138"/>
        <end position="144"/>
    </location>
</feature>
<feature type="turn" evidence="3">
    <location>
        <begin position="154"/>
        <end position="156"/>
    </location>
</feature>
<feature type="helix" evidence="3">
    <location>
        <begin position="159"/>
        <end position="161"/>
    </location>
</feature>
<feature type="strand" evidence="3">
    <location>
        <begin position="162"/>
        <end position="165"/>
    </location>
</feature>
<feature type="helix" evidence="3">
    <location>
        <begin position="167"/>
        <end position="176"/>
    </location>
</feature>
<feature type="strand" evidence="3">
    <location>
        <begin position="177"/>
        <end position="180"/>
    </location>
</feature>
<feature type="helix" evidence="3">
    <location>
        <begin position="184"/>
        <end position="186"/>
    </location>
</feature>
<feature type="helix" evidence="3">
    <location>
        <begin position="190"/>
        <end position="198"/>
    </location>
</feature>
<feature type="turn" evidence="3">
    <location>
        <begin position="199"/>
        <end position="201"/>
    </location>
</feature>
<feature type="strand" evidence="3">
    <location>
        <begin position="204"/>
        <end position="216"/>
    </location>
</feature>
<feature type="helix" evidence="3">
    <location>
        <begin position="234"/>
        <end position="236"/>
    </location>
</feature>
<feature type="helix" evidence="3">
    <location>
        <begin position="243"/>
        <end position="253"/>
    </location>
</feature>
<sequence length="256" mass="30184">MPKVSVIMTSYNKSDYVAKSISSILSQTFSDFELFIMDDNSNEETLNVIRPFLNDNRVRFYQSDISGVKERTEKTRYAALINQAIEMAEGEYITYATDDNIYMPDRLLKMVRELDTHPEKAVIYSASKTYHLNENRDIVKETVRPAAQVTWNAPCAIDHCSVMHRYSVLEKVKEKFGSYWDESPAFYRIGDARFFWRVNHFYPFYPLDEELDLNYITDQSIHFQLFELEKNEFVRNLPPQRNCRELRESLKKLGMG</sequence>
<keyword id="KW-0002">3D-structure</keyword>
<keyword id="KW-1015">Disulfide bond</keyword>
<keyword id="KW-0328">Glycosyltransferase</keyword>
<keyword id="KW-1185">Reference proteome</keyword>
<keyword id="KW-0808">Transferase</keyword>
<organism>
    <name type="scientific">Bacillus subtilis (strain 168)</name>
    <dbReference type="NCBI Taxonomy" id="224308"/>
    <lineage>
        <taxon>Bacteria</taxon>
        <taxon>Bacillati</taxon>
        <taxon>Bacillota</taxon>
        <taxon>Bacilli</taxon>
        <taxon>Bacillales</taxon>
        <taxon>Bacillaceae</taxon>
        <taxon>Bacillus</taxon>
    </lineage>
</organism>
<evidence type="ECO:0000255" key="1"/>
<evidence type="ECO:0000305" key="2"/>
<evidence type="ECO:0007829" key="3">
    <source>
        <dbReference type="PDB" id="1QG8"/>
    </source>
</evidence>
<comment type="function">
    <text>Glycosyltransferase implicated in the synthesis of the spore coat.</text>
</comment>
<comment type="pathway">
    <text>Spore coat biogenesis; spore coat polysaccharide biosynthesis.</text>
</comment>
<comment type="subunit">
    <text>Monomer in solution.</text>
</comment>
<comment type="domain">
    <text>Contains an N-terminal nucleotide-binding domain and a C-terminal acceptor-binding domain.</text>
</comment>
<comment type="similarity">
    <text evidence="2">Belongs to the glycosyltransferase 2 family.</text>
</comment>
<reference key="1">
    <citation type="journal article" date="1993" name="Mol. Microbiol.">
        <title>Bacillus subtilis genome project: cloning and sequencing of the 97 kb region from 325 degrees to 333 degrees.</title>
        <authorList>
            <person name="Glaser P."/>
            <person name="Kunst F."/>
            <person name="Arnaud M."/>
            <person name="Coudart M.P."/>
            <person name="Gonzales W."/>
            <person name="Hullo M.-F."/>
            <person name="Ionescu M."/>
            <person name="Lubochinsky B."/>
            <person name="Marcelino L."/>
            <person name="Moszer I."/>
            <person name="Presecan E."/>
            <person name="Santana M."/>
            <person name="Schneider E."/>
            <person name="Schweizer J."/>
            <person name="Vertes A."/>
            <person name="Rapoport G."/>
            <person name="Danchin A."/>
        </authorList>
    </citation>
    <scope>NUCLEOTIDE SEQUENCE [GENOMIC DNA]</scope>
    <source>
        <strain>168</strain>
    </source>
</reference>
<reference key="2">
    <citation type="journal article" date="1997" name="Nature">
        <title>The complete genome sequence of the Gram-positive bacterium Bacillus subtilis.</title>
        <authorList>
            <person name="Kunst F."/>
            <person name="Ogasawara N."/>
            <person name="Moszer I."/>
            <person name="Albertini A.M."/>
            <person name="Alloni G."/>
            <person name="Azevedo V."/>
            <person name="Bertero M.G."/>
            <person name="Bessieres P."/>
            <person name="Bolotin A."/>
            <person name="Borchert S."/>
            <person name="Borriss R."/>
            <person name="Boursier L."/>
            <person name="Brans A."/>
            <person name="Braun M."/>
            <person name="Brignell S.C."/>
            <person name="Bron S."/>
            <person name="Brouillet S."/>
            <person name="Bruschi C.V."/>
            <person name="Caldwell B."/>
            <person name="Capuano V."/>
            <person name="Carter N.M."/>
            <person name="Choi S.-K."/>
            <person name="Codani J.-J."/>
            <person name="Connerton I.F."/>
            <person name="Cummings N.J."/>
            <person name="Daniel R.A."/>
            <person name="Denizot F."/>
            <person name="Devine K.M."/>
            <person name="Duesterhoeft A."/>
            <person name="Ehrlich S.D."/>
            <person name="Emmerson P.T."/>
            <person name="Entian K.-D."/>
            <person name="Errington J."/>
            <person name="Fabret C."/>
            <person name="Ferrari E."/>
            <person name="Foulger D."/>
            <person name="Fritz C."/>
            <person name="Fujita M."/>
            <person name="Fujita Y."/>
            <person name="Fuma S."/>
            <person name="Galizzi A."/>
            <person name="Galleron N."/>
            <person name="Ghim S.-Y."/>
            <person name="Glaser P."/>
            <person name="Goffeau A."/>
            <person name="Golightly E.J."/>
            <person name="Grandi G."/>
            <person name="Guiseppi G."/>
            <person name="Guy B.J."/>
            <person name="Haga K."/>
            <person name="Haiech J."/>
            <person name="Harwood C.R."/>
            <person name="Henaut A."/>
            <person name="Hilbert H."/>
            <person name="Holsappel S."/>
            <person name="Hosono S."/>
            <person name="Hullo M.-F."/>
            <person name="Itaya M."/>
            <person name="Jones L.-M."/>
            <person name="Joris B."/>
            <person name="Karamata D."/>
            <person name="Kasahara Y."/>
            <person name="Klaerr-Blanchard M."/>
            <person name="Klein C."/>
            <person name="Kobayashi Y."/>
            <person name="Koetter P."/>
            <person name="Koningstein G."/>
            <person name="Krogh S."/>
            <person name="Kumano M."/>
            <person name="Kurita K."/>
            <person name="Lapidus A."/>
            <person name="Lardinois S."/>
            <person name="Lauber J."/>
            <person name="Lazarevic V."/>
            <person name="Lee S.-M."/>
            <person name="Levine A."/>
            <person name="Liu H."/>
            <person name="Masuda S."/>
            <person name="Mauel C."/>
            <person name="Medigue C."/>
            <person name="Medina N."/>
            <person name="Mellado R.P."/>
            <person name="Mizuno M."/>
            <person name="Moestl D."/>
            <person name="Nakai S."/>
            <person name="Noback M."/>
            <person name="Noone D."/>
            <person name="O'Reilly M."/>
            <person name="Ogawa K."/>
            <person name="Ogiwara A."/>
            <person name="Oudega B."/>
            <person name="Park S.-H."/>
            <person name="Parro V."/>
            <person name="Pohl T.M."/>
            <person name="Portetelle D."/>
            <person name="Porwollik S."/>
            <person name="Prescott A.M."/>
            <person name="Presecan E."/>
            <person name="Pujic P."/>
            <person name="Purnelle B."/>
            <person name="Rapoport G."/>
            <person name="Rey M."/>
            <person name="Reynolds S."/>
            <person name="Rieger M."/>
            <person name="Rivolta C."/>
            <person name="Rocha E."/>
            <person name="Roche B."/>
            <person name="Rose M."/>
            <person name="Sadaie Y."/>
            <person name="Sato T."/>
            <person name="Scanlan E."/>
            <person name="Schleich S."/>
            <person name="Schroeter R."/>
            <person name="Scoffone F."/>
            <person name="Sekiguchi J."/>
            <person name="Sekowska A."/>
            <person name="Seror S.J."/>
            <person name="Serror P."/>
            <person name="Shin B.-S."/>
            <person name="Soldo B."/>
            <person name="Sorokin A."/>
            <person name="Tacconi E."/>
            <person name="Takagi T."/>
            <person name="Takahashi H."/>
            <person name="Takemaru K."/>
            <person name="Takeuchi M."/>
            <person name="Tamakoshi A."/>
            <person name="Tanaka T."/>
            <person name="Terpstra P."/>
            <person name="Tognoni A."/>
            <person name="Tosato V."/>
            <person name="Uchiyama S."/>
            <person name="Vandenbol M."/>
            <person name="Vannier F."/>
            <person name="Vassarotti A."/>
            <person name="Viari A."/>
            <person name="Wambutt R."/>
            <person name="Wedler E."/>
            <person name="Wedler H."/>
            <person name="Weitzenegger T."/>
            <person name="Winters P."/>
            <person name="Wipat A."/>
            <person name="Yamamoto H."/>
            <person name="Yamane K."/>
            <person name="Yasumoto K."/>
            <person name="Yata K."/>
            <person name="Yoshida K."/>
            <person name="Yoshikawa H.-F."/>
            <person name="Zumstein E."/>
            <person name="Yoshikawa H."/>
            <person name="Danchin A."/>
        </authorList>
    </citation>
    <scope>NUCLEOTIDE SEQUENCE [LARGE SCALE GENOMIC DNA]</scope>
    <source>
        <strain>168</strain>
    </source>
</reference>
<reference key="3">
    <citation type="journal article" date="1999" name="Acta Crystallogr. D">
        <title>Cloning, crystallization and preliminary X-ray analysis of a nucleotide-diphospho-sugar transferase spsA from Bacillus subtilis.</title>
        <authorList>
            <person name="Charnock S.J."/>
            <person name="Davies G.J."/>
        </authorList>
    </citation>
    <scope>CRYSTALLIZATION</scope>
</reference>
<reference key="4">
    <citation type="journal article" date="1999" name="Biochemistry">
        <title>Structure of the nucleotide-diphospho-sugar transferase, SpsA from Bacillus subtilis, in native and nucleotide-complexed forms.</title>
        <authorList>
            <person name="Charnock S.J."/>
            <person name="Davies G.J."/>
        </authorList>
    </citation>
    <scope>X-RAY CRYSTALLOGRAPHY (1.5 ANGSTROMS)</scope>
</reference>
<reference key="5">
    <citation type="journal article" date="2001" name="J. Mol. Biol.">
        <title>Three-dimensional structures of the Mn and Mg dTDP complexes of the family GT-2 glycosyltransferase SpsA: a comparison with related NDP-sugar glycosyltransferases.</title>
        <authorList>
            <person name="Tarbouriech N."/>
            <person name="Charnock S.J."/>
            <person name="Davies G.J."/>
        </authorList>
    </citation>
    <scope>X-RAY CRYSTALLOGRAPHY (1.98 ANGSTROMS)</scope>
</reference>
<proteinExistence type="evidence at protein level"/>